<evidence type="ECO:0000255" key="1"/>
<evidence type="ECO:0000305" key="2"/>
<accession>Q54WC3</accession>
<comment type="similarity">
    <text evidence="2">Belongs to the CLN5 family.</text>
</comment>
<sequence length="325" mass="37697">MNKLIFIIICLGIVDKTISSDFKSYNDGIYSFTYDNICSFKNSIRDQDVYELYYVQAPLLYATYGNLLEKINAYHSGIVLYNKNNGPNITIDYYAIPSFEATLFPKSIIKDSQGNYNITWDTHGLIEVTNYINETYWNKRQLIMYDLSGIQIKQYLSWAPIYNKTHTFYNLFNIESDLSISNSSKIYKNSSTCDDFVWASFDVLYKLGGTIASVQSDPQRDDIKLFISSGEPKIVDYNDSIKRNQIASFFNELKDFANLGKNKTALEIFNELITFFNGYFYCYIDGEYYEMKLSKQNPISFTYLPSPIPIGKRNFNEIKKLGFCK</sequence>
<protein>
    <recommendedName>
        <fullName>Cln5-like protein 2</fullName>
    </recommendedName>
</protein>
<reference key="1">
    <citation type="journal article" date="2005" name="Nature">
        <title>The genome of the social amoeba Dictyostelium discoideum.</title>
        <authorList>
            <person name="Eichinger L."/>
            <person name="Pachebat J.A."/>
            <person name="Gloeckner G."/>
            <person name="Rajandream M.A."/>
            <person name="Sucgang R."/>
            <person name="Berriman M."/>
            <person name="Song J."/>
            <person name="Olsen R."/>
            <person name="Szafranski K."/>
            <person name="Xu Q."/>
            <person name="Tunggal B."/>
            <person name="Kummerfeld S."/>
            <person name="Madera M."/>
            <person name="Konfortov B.A."/>
            <person name="Rivero F."/>
            <person name="Bankier A.T."/>
            <person name="Lehmann R."/>
            <person name="Hamlin N."/>
            <person name="Davies R."/>
            <person name="Gaudet P."/>
            <person name="Fey P."/>
            <person name="Pilcher K."/>
            <person name="Chen G."/>
            <person name="Saunders D."/>
            <person name="Sodergren E.J."/>
            <person name="Davis P."/>
            <person name="Kerhornou A."/>
            <person name="Nie X."/>
            <person name="Hall N."/>
            <person name="Anjard C."/>
            <person name="Hemphill L."/>
            <person name="Bason N."/>
            <person name="Farbrother P."/>
            <person name="Desany B."/>
            <person name="Just E."/>
            <person name="Morio T."/>
            <person name="Rost R."/>
            <person name="Churcher C.M."/>
            <person name="Cooper J."/>
            <person name="Haydock S."/>
            <person name="van Driessche N."/>
            <person name="Cronin A."/>
            <person name="Goodhead I."/>
            <person name="Muzny D.M."/>
            <person name="Mourier T."/>
            <person name="Pain A."/>
            <person name="Lu M."/>
            <person name="Harper D."/>
            <person name="Lindsay R."/>
            <person name="Hauser H."/>
            <person name="James K.D."/>
            <person name="Quiles M."/>
            <person name="Madan Babu M."/>
            <person name="Saito T."/>
            <person name="Buchrieser C."/>
            <person name="Wardroper A."/>
            <person name="Felder M."/>
            <person name="Thangavelu M."/>
            <person name="Johnson D."/>
            <person name="Knights A."/>
            <person name="Loulseged H."/>
            <person name="Mungall K.L."/>
            <person name="Oliver K."/>
            <person name="Price C."/>
            <person name="Quail M.A."/>
            <person name="Urushihara H."/>
            <person name="Hernandez J."/>
            <person name="Rabbinowitsch E."/>
            <person name="Steffen D."/>
            <person name="Sanders M."/>
            <person name="Ma J."/>
            <person name="Kohara Y."/>
            <person name="Sharp S."/>
            <person name="Simmonds M.N."/>
            <person name="Spiegler S."/>
            <person name="Tivey A."/>
            <person name="Sugano S."/>
            <person name="White B."/>
            <person name="Walker D."/>
            <person name="Woodward J.R."/>
            <person name="Winckler T."/>
            <person name="Tanaka Y."/>
            <person name="Shaulsky G."/>
            <person name="Schleicher M."/>
            <person name="Weinstock G.M."/>
            <person name="Rosenthal A."/>
            <person name="Cox E.C."/>
            <person name="Chisholm R.L."/>
            <person name="Gibbs R.A."/>
            <person name="Loomis W.F."/>
            <person name="Platzer M."/>
            <person name="Kay R.R."/>
            <person name="Williams J.G."/>
            <person name="Dear P.H."/>
            <person name="Noegel A.A."/>
            <person name="Barrell B.G."/>
            <person name="Kuspa A."/>
        </authorList>
    </citation>
    <scope>NUCLEOTIDE SEQUENCE [LARGE SCALE GENOMIC DNA]</scope>
    <source>
        <strain>AX4</strain>
    </source>
</reference>
<feature type="signal peptide" evidence="1">
    <location>
        <begin position="1"/>
        <end position="19"/>
    </location>
</feature>
<feature type="chain" id="PRO_0000330475" description="Cln5-like protein 2">
    <location>
        <begin position="20"/>
        <end position="325"/>
    </location>
</feature>
<feature type="glycosylation site" description="N-linked (GlcNAc...) asparagine" evidence="1">
    <location>
        <position position="88"/>
    </location>
</feature>
<feature type="glycosylation site" description="N-linked (GlcNAc...) asparagine" evidence="1">
    <location>
        <position position="117"/>
    </location>
</feature>
<feature type="glycosylation site" description="N-linked (GlcNAc...) asparagine" evidence="1">
    <location>
        <position position="133"/>
    </location>
</feature>
<feature type="glycosylation site" description="N-linked (GlcNAc...) asparagine" evidence="1">
    <location>
        <position position="163"/>
    </location>
</feature>
<feature type="glycosylation site" description="N-linked (GlcNAc...) asparagine" evidence="1">
    <location>
        <position position="182"/>
    </location>
</feature>
<feature type="glycosylation site" description="N-linked (GlcNAc...) asparagine" evidence="1">
    <location>
        <position position="189"/>
    </location>
</feature>
<feature type="glycosylation site" description="N-linked (GlcNAc...) asparagine" evidence="1">
    <location>
        <position position="238"/>
    </location>
</feature>
<feature type="glycosylation site" description="N-linked (GlcNAc...) asparagine" evidence="1">
    <location>
        <position position="262"/>
    </location>
</feature>
<dbReference type="EMBL" id="AAFI02000032">
    <property type="protein sequence ID" value="EAL67558.1"/>
    <property type="molecule type" value="Genomic_DNA"/>
</dbReference>
<dbReference type="RefSeq" id="XP_641535.1">
    <property type="nucleotide sequence ID" value="XM_636443.1"/>
</dbReference>
<dbReference type="SMR" id="Q54WC3"/>
<dbReference type="FunCoup" id="Q54WC3">
    <property type="interactions" value="2"/>
</dbReference>
<dbReference type="GlyCosmos" id="Q54WC3">
    <property type="glycosylation" value="8 sites, No reported glycans"/>
</dbReference>
<dbReference type="GlyGen" id="Q54WC3">
    <property type="glycosylation" value="8 sites"/>
</dbReference>
<dbReference type="PaxDb" id="44689-DDB0206016"/>
<dbReference type="EnsemblProtists" id="EAL67558">
    <property type="protein sequence ID" value="EAL67558"/>
    <property type="gene ID" value="DDB_G0279757"/>
</dbReference>
<dbReference type="GeneID" id="8622208"/>
<dbReference type="KEGG" id="ddi:DDB_G0279757"/>
<dbReference type="dictyBase" id="DDB_G0279757"/>
<dbReference type="VEuPathDB" id="AmoebaDB:DDB_G0279757"/>
<dbReference type="eggNOG" id="ENOG502RHN2">
    <property type="taxonomic scope" value="Eukaryota"/>
</dbReference>
<dbReference type="HOGENOM" id="CLU_062132_0_0_1"/>
<dbReference type="InParanoid" id="Q54WC3"/>
<dbReference type="PhylomeDB" id="Q54WC3"/>
<dbReference type="PRO" id="PR:Q54WC3"/>
<dbReference type="Proteomes" id="UP000002195">
    <property type="component" value="Chromosome 3"/>
</dbReference>
<dbReference type="GO" id="GO:0005765">
    <property type="term" value="C:lysosomal membrane"/>
    <property type="evidence" value="ECO:0000318"/>
    <property type="project" value="GO_Central"/>
</dbReference>
<dbReference type="GO" id="GO:0016798">
    <property type="term" value="F:hydrolase activity, acting on glycosyl bonds"/>
    <property type="evidence" value="ECO:0000318"/>
    <property type="project" value="GO_Central"/>
</dbReference>
<dbReference type="GO" id="GO:0007040">
    <property type="term" value="P:lysosome organization"/>
    <property type="evidence" value="ECO:0000318"/>
    <property type="project" value="GO_Central"/>
</dbReference>
<dbReference type="InterPro" id="IPR026138">
    <property type="entry name" value="CLN5"/>
</dbReference>
<dbReference type="PANTHER" id="PTHR15380">
    <property type="entry name" value="CEROID-LIPOFUSCINOSIS, NEURONAL 5"/>
    <property type="match status" value="1"/>
</dbReference>
<dbReference type="PANTHER" id="PTHR15380:SF1">
    <property type="entry name" value="CLN5-LIKE PROTEIN 1-RELATED"/>
    <property type="match status" value="1"/>
</dbReference>
<dbReference type="Pfam" id="PF15014">
    <property type="entry name" value="CLN5"/>
    <property type="match status" value="1"/>
</dbReference>
<keyword id="KW-0325">Glycoprotein</keyword>
<keyword id="KW-1185">Reference proteome</keyword>
<keyword id="KW-0732">Signal</keyword>
<proteinExistence type="inferred from homology"/>
<organism>
    <name type="scientific">Dictyostelium discoideum</name>
    <name type="common">Social amoeba</name>
    <dbReference type="NCBI Taxonomy" id="44689"/>
    <lineage>
        <taxon>Eukaryota</taxon>
        <taxon>Amoebozoa</taxon>
        <taxon>Evosea</taxon>
        <taxon>Eumycetozoa</taxon>
        <taxon>Dictyostelia</taxon>
        <taxon>Dictyosteliales</taxon>
        <taxon>Dictyosteliaceae</taxon>
        <taxon>Dictyostelium</taxon>
    </lineage>
</organism>
<name>CLN5B_DICDI</name>
<gene>
    <name type="primary">cln5lb</name>
    <name type="ORF">DDB_G0279757</name>
</gene>